<reference key="1">
    <citation type="journal article" date="2008" name="Antimicrob. Agents Chemother.">
        <title>Whole-genome pyrosequencing of an epidemic multidrug-resistant Acinetobacter baumannii strain belonging to the European clone II group.</title>
        <authorList>
            <person name="Iacono M."/>
            <person name="Villa L."/>
            <person name="Fortini D."/>
            <person name="Bordoni R."/>
            <person name="Imperi F."/>
            <person name="Bonnal R.J."/>
            <person name="Sicheritz-Ponten T."/>
            <person name="De Bellis G."/>
            <person name="Visca P."/>
            <person name="Cassone A."/>
            <person name="Carattoli A."/>
        </authorList>
    </citation>
    <scope>NUCLEOTIDE SEQUENCE [LARGE SCALE GENOMIC DNA]</scope>
    <source>
        <strain>ACICU</strain>
    </source>
</reference>
<evidence type="ECO:0000255" key="1">
    <source>
        <dbReference type="HAMAP-Rule" id="MF_00048"/>
    </source>
</evidence>
<organism>
    <name type="scientific">Acinetobacter baumannii (strain ACICU)</name>
    <dbReference type="NCBI Taxonomy" id="405416"/>
    <lineage>
        <taxon>Bacteria</taxon>
        <taxon>Pseudomonadati</taxon>
        <taxon>Pseudomonadota</taxon>
        <taxon>Gammaproteobacteria</taxon>
        <taxon>Moraxellales</taxon>
        <taxon>Moraxellaceae</taxon>
        <taxon>Acinetobacter</taxon>
        <taxon>Acinetobacter calcoaceticus/baumannii complex</taxon>
    </lineage>
</organism>
<dbReference type="EMBL" id="CP000863">
    <property type="protein sequence ID" value="ACC56401.1"/>
    <property type="molecule type" value="Genomic_DNA"/>
</dbReference>
<dbReference type="RefSeq" id="WP_000959396.1">
    <property type="nucleotide sequence ID" value="NZ_CP031380.1"/>
</dbReference>
<dbReference type="SMR" id="B2HWE2"/>
<dbReference type="KEGG" id="abc:ACICU_01089"/>
<dbReference type="HOGENOM" id="CLU_115353_1_1_6"/>
<dbReference type="Proteomes" id="UP000008839">
    <property type="component" value="Chromosome"/>
</dbReference>
<dbReference type="GO" id="GO:0003676">
    <property type="term" value="F:nucleic acid binding"/>
    <property type="evidence" value="ECO:0007669"/>
    <property type="project" value="InterPro"/>
</dbReference>
<dbReference type="CDD" id="cd20736">
    <property type="entry name" value="PoNe_Nuclease"/>
    <property type="match status" value="1"/>
</dbReference>
<dbReference type="Gene3D" id="3.40.1350.10">
    <property type="match status" value="1"/>
</dbReference>
<dbReference type="HAMAP" id="MF_00048">
    <property type="entry name" value="UPF0102"/>
    <property type="match status" value="1"/>
</dbReference>
<dbReference type="InterPro" id="IPR011335">
    <property type="entry name" value="Restrct_endonuc-II-like"/>
</dbReference>
<dbReference type="InterPro" id="IPR011856">
    <property type="entry name" value="tRNA_endonuc-like_dom_sf"/>
</dbReference>
<dbReference type="InterPro" id="IPR003509">
    <property type="entry name" value="UPF0102_YraN-like"/>
</dbReference>
<dbReference type="NCBIfam" id="NF009150">
    <property type="entry name" value="PRK12497.1-3"/>
    <property type="match status" value="1"/>
</dbReference>
<dbReference type="NCBIfam" id="NF011267">
    <property type="entry name" value="PRK14674.1"/>
    <property type="match status" value="1"/>
</dbReference>
<dbReference type="NCBIfam" id="TIGR00252">
    <property type="entry name" value="YraN family protein"/>
    <property type="match status" value="1"/>
</dbReference>
<dbReference type="PANTHER" id="PTHR34039">
    <property type="entry name" value="UPF0102 PROTEIN YRAN"/>
    <property type="match status" value="1"/>
</dbReference>
<dbReference type="PANTHER" id="PTHR34039:SF1">
    <property type="entry name" value="UPF0102 PROTEIN YRAN"/>
    <property type="match status" value="1"/>
</dbReference>
<dbReference type="Pfam" id="PF02021">
    <property type="entry name" value="UPF0102"/>
    <property type="match status" value="1"/>
</dbReference>
<dbReference type="SUPFAM" id="SSF52980">
    <property type="entry name" value="Restriction endonuclease-like"/>
    <property type="match status" value="1"/>
</dbReference>
<sequence>MLVAQQLGQWAEQTALKLLKEQNYEWVASNYHSRRGEVDLIVKRGNELIFVEVKARGQGNYGQACEMVTLSKQKKIIKTAMRFLQRYPSYQDFYCRFDVICFDFPQKIAKTVQQDFSKFHYDLQWIENAFTLD</sequence>
<name>Y1089_ACIBC</name>
<comment type="similarity">
    <text evidence="1">Belongs to the UPF0102 family.</text>
</comment>
<gene>
    <name type="ordered locus">ACICU_01089</name>
</gene>
<feature type="chain" id="PRO_1000091220" description="UPF0102 protein ACICU_01089">
    <location>
        <begin position="1"/>
        <end position="133"/>
    </location>
</feature>
<proteinExistence type="inferred from homology"/>
<protein>
    <recommendedName>
        <fullName evidence="1">UPF0102 protein ACICU_01089</fullName>
    </recommendedName>
</protein>
<accession>B2HWE2</accession>